<evidence type="ECO:0000255" key="1">
    <source>
        <dbReference type="HAMAP-Rule" id="MF_00339"/>
    </source>
</evidence>
<protein>
    <recommendedName>
        <fullName evidence="1">ATP-dependent 6-phosphofructokinase</fullName>
        <shortName evidence="1">ATP-PFK</shortName>
        <shortName evidence="1">Phosphofructokinase</shortName>
        <ecNumber evidence="1">2.7.1.11</ecNumber>
    </recommendedName>
    <alternativeName>
        <fullName evidence="1">Phosphohexokinase</fullName>
    </alternativeName>
</protein>
<name>PFKA_SALEP</name>
<dbReference type="EC" id="2.7.1.11" evidence="1"/>
<dbReference type="EMBL" id="AM933172">
    <property type="protein sequence ID" value="CAR35425.1"/>
    <property type="molecule type" value="Genomic_DNA"/>
</dbReference>
<dbReference type="RefSeq" id="WP_000591793.1">
    <property type="nucleotide sequence ID" value="NC_011294.1"/>
</dbReference>
<dbReference type="SMR" id="B5QWZ5"/>
<dbReference type="GeneID" id="66758327"/>
<dbReference type="KEGG" id="set:SEN3852"/>
<dbReference type="HOGENOM" id="CLU_020655_0_1_6"/>
<dbReference type="UniPathway" id="UPA00109">
    <property type="reaction ID" value="UER00182"/>
</dbReference>
<dbReference type="Proteomes" id="UP000000613">
    <property type="component" value="Chromosome"/>
</dbReference>
<dbReference type="GO" id="GO:0005945">
    <property type="term" value="C:6-phosphofructokinase complex"/>
    <property type="evidence" value="ECO:0007669"/>
    <property type="project" value="TreeGrafter"/>
</dbReference>
<dbReference type="GO" id="GO:0003872">
    <property type="term" value="F:6-phosphofructokinase activity"/>
    <property type="evidence" value="ECO:0007669"/>
    <property type="project" value="UniProtKB-UniRule"/>
</dbReference>
<dbReference type="GO" id="GO:0016208">
    <property type="term" value="F:AMP binding"/>
    <property type="evidence" value="ECO:0007669"/>
    <property type="project" value="TreeGrafter"/>
</dbReference>
<dbReference type="GO" id="GO:0005524">
    <property type="term" value="F:ATP binding"/>
    <property type="evidence" value="ECO:0007669"/>
    <property type="project" value="UniProtKB-KW"/>
</dbReference>
<dbReference type="GO" id="GO:0070095">
    <property type="term" value="F:fructose-6-phosphate binding"/>
    <property type="evidence" value="ECO:0007669"/>
    <property type="project" value="TreeGrafter"/>
</dbReference>
<dbReference type="GO" id="GO:0042802">
    <property type="term" value="F:identical protein binding"/>
    <property type="evidence" value="ECO:0007669"/>
    <property type="project" value="TreeGrafter"/>
</dbReference>
<dbReference type="GO" id="GO:0046872">
    <property type="term" value="F:metal ion binding"/>
    <property type="evidence" value="ECO:0007669"/>
    <property type="project" value="UniProtKB-KW"/>
</dbReference>
<dbReference type="GO" id="GO:0048029">
    <property type="term" value="F:monosaccharide binding"/>
    <property type="evidence" value="ECO:0007669"/>
    <property type="project" value="TreeGrafter"/>
</dbReference>
<dbReference type="GO" id="GO:0061621">
    <property type="term" value="P:canonical glycolysis"/>
    <property type="evidence" value="ECO:0007669"/>
    <property type="project" value="TreeGrafter"/>
</dbReference>
<dbReference type="GO" id="GO:0030388">
    <property type="term" value="P:fructose 1,6-bisphosphate metabolic process"/>
    <property type="evidence" value="ECO:0007669"/>
    <property type="project" value="TreeGrafter"/>
</dbReference>
<dbReference type="GO" id="GO:0006002">
    <property type="term" value="P:fructose 6-phosphate metabolic process"/>
    <property type="evidence" value="ECO:0007669"/>
    <property type="project" value="InterPro"/>
</dbReference>
<dbReference type="CDD" id="cd00763">
    <property type="entry name" value="Bacterial_PFK"/>
    <property type="match status" value="1"/>
</dbReference>
<dbReference type="FunFam" id="3.40.50.450:FF:000001">
    <property type="entry name" value="ATP-dependent 6-phosphofructokinase"/>
    <property type="match status" value="1"/>
</dbReference>
<dbReference type="FunFam" id="3.40.50.460:FF:000002">
    <property type="entry name" value="ATP-dependent 6-phosphofructokinase"/>
    <property type="match status" value="1"/>
</dbReference>
<dbReference type="Gene3D" id="3.40.50.450">
    <property type="match status" value="1"/>
</dbReference>
<dbReference type="Gene3D" id="3.40.50.460">
    <property type="entry name" value="Phosphofructokinase domain"/>
    <property type="match status" value="1"/>
</dbReference>
<dbReference type="HAMAP" id="MF_00339">
    <property type="entry name" value="Phosphofructokinase_I_B1"/>
    <property type="match status" value="1"/>
</dbReference>
<dbReference type="InterPro" id="IPR022953">
    <property type="entry name" value="ATP_PFK"/>
</dbReference>
<dbReference type="InterPro" id="IPR012003">
    <property type="entry name" value="ATP_PFK_prok-type"/>
</dbReference>
<dbReference type="InterPro" id="IPR012828">
    <property type="entry name" value="PFKA_ATP_prok"/>
</dbReference>
<dbReference type="InterPro" id="IPR015912">
    <property type="entry name" value="Phosphofructokinase_CS"/>
</dbReference>
<dbReference type="InterPro" id="IPR000023">
    <property type="entry name" value="Phosphofructokinase_dom"/>
</dbReference>
<dbReference type="InterPro" id="IPR035966">
    <property type="entry name" value="PKF_sf"/>
</dbReference>
<dbReference type="NCBIfam" id="TIGR02482">
    <property type="entry name" value="PFKA_ATP"/>
    <property type="match status" value="1"/>
</dbReference>
<dbReference type="NCBIfam" id="NF002872">
    <property type="entry name" value="PRK03202.1"/>
    <property type="match status" value="1"/>
</dbReference>
<dbReference type="PANTHER" id="PTHR13697:SF4">
    <property type="entry name" value="ATP-DEPENDENT 6-PHOSPHOFRUCTOKINASE"/>
    <property type="match status" value="1"/>
</dbReference>
<dbReference type="PANTHER" id="PTHR13697">
    <property type="entry name" value="PHOSPHOFRUCTOKINASE"/>
    <property type="match status" value="1"/>
</dbReference>
<dbReference type="Pfam" id="PF00365">
    <property type="entry name" value="PFK"/>
    <property type="match status" value="1"/>
</dbReference>
<dbReference type="PIRSF" id="PIRSF000532">
    <property type="entry name" value="ATP_PFK_prok"/>
    <property type="match status" value="1"/>
</dbReference>
<dbReference type="PRINTS" id="PR00476">
    <property type="entry name" value="PHFRCTKINASE"/>
</dbReference>
<dbReference type="SUPFAM" id="SSF53784">
    <property type="entry name" value="Phosphofructokinase"/>
    <property type="match status" value="1"/>
</dbReference>
<dbReference type="PROSITE" id="PS00433">
    <property type="entry name" value="PHOSPHOFRUCTOKINASE"/>
    <property type="match status" value="1"/>
</dbReference>
<organism>
    <name type="scientific">Salmonella enteritidis PT4 (strain P125109)</name>
    <dbReference type="NCBI Taxonomy" id="550537"/>
    <lineage>
        <taxon>Bacteria</taxon>
        <taxon>Pseudomonadati</taxon>
        <taxon>Pseudomonadota</taxon>
        <taxon>Gammaproteobacteria</taxon>
        <taxon>Enterobacterales</taxon>
        <taxon>Enterobacteriaceae</taxon>
        <taxon>Salmonella</taxon>
    </lineage>
</organism>
<reference key="1">
    <citation type="journal article" date="2008" name="Genome Res.">
        <title>Comparative genome analysis of Salmonella enteritidis PT4 and Salmonella gallinarum 287/91 provides insights into evolutionary and host adaptation pathways.</title>
        <authorList>
            <person name="Thomson N.R."/>
            <person name="Clayton D.J."/>
            <person name="Windhorst D."/>
            <person name="Vernikos G."/>
            <person name="Davidson S."/>
            <person name="Churcher C."/>
            <person name="Quail M.A."/>
            <person name="Stevens M."/>
            <person name="Jones M.A."/>
            <person name="Watson M."/>
            <person name="Barron A."/>
            <person name="Layton A."/>
            <person name="Pickard D."/>
            <person name="Kingsley R.A."/>
            <person name="Bignell A."/>
            <person name="Clark L."/>
            <person name="Harris B."/>
            <person name="Ormond D."/>
            <person name="Abdellah Z."/>
            <person name="Brooks K."/>
            <person name="Cherevach I."/>
            <person name="Chillingworth T."/>
            <person name="Woodward J."/>
            <person name="Norberczak H."/>
            <person name="Lord A."/>
            <person name="Arrowsmith C."/>
            <person name="Jagels K."/>
            <person name="Moule S."/>
            <person name="Mungall K."/>
            <person name="Saunders M."/>
            <person name="Whitehead S."/>
            <person name="Chabalgoity J.A."/>
            <person name="Maskell D."/>
            <person name="Humphreys T."/>
            <person name="Roberts M."/>
            <person name="Barrow P.A."/>
            <person name="Dougan G."/>
            <person name="Parkhill J."/>
        </authorList>
    </citation>
    <scope>NUCLEOTIDE SEQUENCE [LARGE SCALE GENOMIC DNA]</scope>
    <source>
        <strain>P125109</strain>
    </source>
</reference>
<keyword id="KW-0021">Allosteric enzyme</keyword>
<keyword id="KW-0067">ATP-binding</keyword>
<keyword id="KW-0963">Cytoplasm</keyword>
<keyword id="KW-0324">Glycolysis</keyword>
<keyword id="KW-0418">Kinase</keyword>
<keyword id="KW-0460">Magnesium</keyword>
<keyword id="KW-0479">Metal-binding</keyword>
<keyword id="KW-0547">Nucleotide-binding</keyword>
<keyword id="KW-0808">Transferase</keyword>
<gene>
    <name evidence="1" type="primary">pfkA</name>
    <name type="ordered locus">SEN3852</name>
</gene>
<accession>B5QWZ5</accession>
<proteinExistence type="inferred from homology"/>
<comment type="function">
    <text evidence="1">Catalyzes the phosphorylation of D-fructose 6-phosphate to fructose 1,6-bisphosphate by ATP, the first committing step of glycolysis.</text>
</comment>
<comment type="catalytic activity">
    <reaction evidence="1">
        <text>beta-D-fructose 6-phosphate + ATP = beta-D-fructose 1,6-bisphosphate + ADP + H(+)</text>
        <dbReference type="Rhea" id="RHEA:16109"/>
        <dbReference type="ChEBI" id="CHEBI:15378"/>
        <dbReference type="ChEBI" id="CHEBI:30616"/>
        <dbReference type="ChEBI" id="CHEBI:32966"/>
        <dbReference type="ChEBI" id="CHEBI:57634"/>
        <dbReference type="ChEBI" id="CHEBI:456216"/>
        <dbReference type="EC" id="2.7.1.11"/>
    </reaction>
</comment>
<comment type="cofactor">
    <cofactor evidence="1">
        <name>Mg(2+)</name>
        <dbReference type="ChEBI" id="CHEBI:18420"/>
    </cofactor>
</comment>
<comment type="activity regulation">
    <text evidence="1">Allosterically activated by ADP and other diphosphonucleosides, and allosterically inhibited by phosphoenolpyruvate.</text>
</comment>
<comment type="pathway">
    <text evidence="1">Carbohydrate degradation; glycolysis; D-glyceraldehyde 3-phosphate and glycerone phosphate from D-glucose: step 3/4.</text>
</comment>
<comment type="subunit">
    <text evidence="1">Homotetramer.</text>
</comment>
<comment type="subcellular location">
    <subcellularLocation>
        <location evidence="1">Cytoplasm</location>
    </subcellularLocation>
</comment>
<comment type="similarity">
    <text evidence="1">Belongs to the phosphofructokinase type A (PFKA) family. ATP-dependent PFK group I subfamily. Prokaryotic clade 'B1' sub-subfamily.</text>
</comment>
<sequence length="320" mass="34915">MIKKIGVLTSGGDAPGMNAAIRGVVRAALTEGLEVMGIYDGYLGLYEDRMVQLDRYSVSDMINRGGTFLGSARFPEFRDENIRAVAIENLKKRGIDALVVIGGDGSYMGAKRLTEMGFPCIGLPGTIDNDIKGTDYTIGYFTALGTVVEAIDRLRDTSSSHQRISIVEVMGRYCGDLTLAAAIAGGCEFIVVPEVEFNREDLVAEIKAGIAKGKKHAIVAITEHMCDVDELAHFIEKETGRETRATVLGHIQRGGSPVPYDRILASRMGAYAIDLLLEGHGGRCVGIQNEQLVHHDIIDAIENMKRPFKSDWMECAKKLY</sequence>
<feature type="chain" id="PRO_1000120052" description="ATP-dependent 6-phosphofructokinase">
    <location>
        <begin position="1"/>
        <end position="320"/>
    </location>
</feature>
<feature type="active site" description="Proton acceptor" evidence="1">
    <location>
        <position position="128"/>
    </location>
</feature>
<feature type="binding site" evidence="1">
    <location>
        <position position="12"/>
    </location>
    <ligand>
        <name>ATP</name>
        <dbReference type="ChEBI" id="CHEBI:30616"/>
    </ligand>
</feature>
<feature type="binding site" evidence="1">
    <location>
        <begin position="22"/>
        <end position="26"/>
    </location>
    <ligand>
        <name>ADP</name>
        <dbReference type="ChEBI" id="CHEBI:456216"/>
        <note>allosteric activator; ligand shared between dimeric partners</note>
    </ligand>
</feature>
<feature type="binding site" evidence="1">
    <location>
        <begin position="55"/>
        <end position="60"/>
    </location>
    <ligand>
        <name>ADP</name>
        <dbReference type="ChEBI" id="CHEBI:456216"/>
        <note>allosteric activator; ligand shared between dimeric partners</note>
    </ligand>
</feature>
<feature type="binding site" evidence="1">
    <location>
        <begin position="73"/>
        <end position="74"/>
    </location>
    <ligand>
        <name>ATP</name>
        <dbReference type="ChEBI" id="CHEBI:30616"/>
    </ligand>
</feature>
<feature type="binding site" evidence="1">
    <location>
        <begin position="103"/>
        <end position="106"/>
    </location>
    <ligand>
        <name>ATP</name>
        <dbReference type="ChEBI" id="CHEBI:30616"/>
    </ligand>
</feature>
<feature type="binding site" evidence="1">
    <location>
        <position position="104"/>
    </location>
    <ligand>
        <name>Mg(2+)</name>
        <dbReference type="ChEBI" id="CHEBI:18420"/>
        <note>catalytic</note>
    </ligand>
</feature>
<feature type="binding site" description="in other chain" evidence="1">
    <location>
        <begin position="126"/>
        <end position="128"/>
    </location>
    <ligand>
        <name>substrate</name>
        <note>ligand shared between dimeric partners</note>
    </ligand>
</feature>
<feature type="binding site" description="in other chain" evidence="1">
    <location>
        <position position="155"/>
    </location>
    <ligand>
        <name>ADP</name>
        <dbReference type="ChEBI" id="CHEBI:456216"/>
        <note>allosteric activator; ligand shared between dimeric partners</note>
    </ligand>
</feature>
<feature type="binding site" evidence="1">
    <location>
        <position position="163"/>
    </location>
    <ligand>
        <name>substrate</name>
        <note>ligand shared between dimeric partners</note>
    </ligand>
</feature>
<feature type="binding site" description="in other chain" evidence="1">
    <location>
        <begin position="170"/>
        <end position="172"/>
    </location>
    <ligand>
        <name>substrate</name>
        <note>ligand shared between dimeric partners</note>
    </ligand>
</feature>
<feature type="binding site" description="in other chain" evidence="1">
    <location>
        <begin position="186"/>
        <end position="188"/>
    </location>
    <ligand>
        <name>ADP</name>
        <dbReference type="ChEBI" id="CHEBI:456216"/>
        <note>allosteric activator; ligand shared between dimeric partners</note>
    </ligand>
</feature>
<feature type="binding site" description="in other chain" evidence="1">
    <location>
        <position position="212"/>
    </location>
    <ligand>
        <name>ADP</name>
        <dbReference type="ChEBI" id="CHEBI:456216"/>
        <note>allosteric activator; ligand shared between dimeric partners</note>
    </ligand>
</feature>
<feature type="binding site" description="in other chain" evidence="1">
    <location>
        <begin position="214"/>
        <end position="216"/>
    </location>
    <ligand>
        <name>ADP</name>
        <dbReference type="ChEBI" id="CHEBI:456216"/>
        <note>allosteric activator; ligand shared between dimeric partners</note>
    </ligand>
</feature>
<feature type="binding site" description="in other chain" evidence="1">
    <location>
        <position position="223"/>
    </location>
    <ligand>
        <name>substrate</name>
        <note>ligand shared between dimeric partners</note>
    </ligand>
</feature>
<feature type="binding site" evidence="1">
    <location>
        <position position="244"/>
    </location>
    <ligand>
        <name>substrate</name>
        <note>ligand shared between dimeric partners</note>
    </ligand>
</feature>
<feature type="binding site" description="in other chain" evidence="1">
    <location>
        <begin position="250"/>
        <end position="253"/>
    </location>
    <ligand>
        <name>substrate</name>
        <note>ligand shared between dimeric partners</note>
    </ligand>
</feature>